<geneLocation type="chloroplast"/>
<comment type="function">
    <text>May interact with a ClpP-like protease involved in degradation of denatured proteins in the chloroplast.</text>
</comment>
<comment type="subcellular location">
    <subcellularLocation>
        <location>Plastid</location>
        <location>Chloroplast</location>
    </subcellularLocation>
</comment>
<comment type="similarity">
    <text evidence="4">Belongs to the ClpA/ClpB family.</text>
</comment>
<evidence type="ECO:0000255" key="1"/>
<evidence type="ECO:0000255" key="2">
    <source>
        <dbReference type="PROSITE-ProRule" id="PRU01251"/>
    </source>
</evidence>
<evidence type="ECO:0000256" key="3">
    <source>
        <dbReference type="SAM" id="MobiDB-lite"/>
    </source>
</evidence>
<evidence type="ECO:0000305" key="4"/>
<proteinExistence type="inferred from homology"/>
<dbReference type="EMBL" id="Z67753">
    <property type="protein sequence ID" value="CAA91619.1"/>
    <property type="molecule type" value="Genomic_DNA"/>
</dbReference>
<dbReference type="PIR" id="S78246">
    <property type="entry name" value="S78246"/>
</dbReference>
<dbReference type="RefSeq" id="NP_043587.1">
    <property type="nucleotide sequence ID" value="NC_001713.1"/>
</dbReference>
<dbReference type="SMR" id="P49574"/>
<dbReference type="GeneID" id="801770"/>
<dbReference type="GO" id="GO:0009507">
    <property type="term" value="C:chloroplast"/>
    <property type="evidence" value="ECO:0007669"/>
    <property type="project" value="UniProtKB-SubCell"/>
</dbReference>
<dbReference type="GO" id="GO:0005524">
    <property type="term" value="F:ATP binding"/>
    <property type="evidence" value="ECO:0007669"/>
    <property type="project" value="UniProtKB-KW"/>
</dbReference>
<dbReference type="GO" id="GO:0016887">
    <property type="term" value="F:ATP hydrolysis activity"/>
    <property type="evidence" value="ECO:0007669"/>
    <property type="project" value="InterPro"/>
</dbReference>
<dbReference type="GO" id="GO:0034605">
    <property type="term" value="P:cellular response to heat"/>
    <property type="evidence" value="ECO:0007669"/>
    <property type="project" value="TreeGrafter"/>
</dbReference>
<dbReference type="CDD" id="cd00009">
    <property type="entry name" value="AAA"/>
    <property type="match status" value="1"/>
</dbReference>
<dbReference type="CDD" id="cd19499">
    <property type="entry name" value="RecA-like_ClpB_Hsp104-like"/>
    <property type="match status" value="1"/>
</dbReference>
<dbReference type="FunFam" id="3.40.50.300:FF:000025">
    <property type="entry name" value="ATP-dependent Clp protease subunit"/>
    <property type="match status" value="1"/>
</dbReference>
<dbReference type="FunFam" id="3.40.50.300:FF:000010">
    <property type="entry name" value="Chaperone clpB 1, putative"/>
    <property type="match status" value="1"/>
</dbReference>
<dbReference type="Gene3D" id="1.10.8.60">
    <property type="match status" value="2"/>
</dbReference>
<dbReference type="Gene3D" id="1.10.1780.10">
    <property type="entry name" value="Clp, N-terminal domain"/>
    <property type="match status" value="1"/>
</dbReference>
<dbReference type="Gene3D" id="3.40.50.300">
    <property type="entry name" value="P-loop containing nucleotide triphosphate hydrolases"/>
    <property type="match status" value="2"/>
</dbReference>
<dbReference type="Gene3D" id="4.10.860.10">
    <property type="entry name" value="UVR domain"/>
    <property type="match status" value="1"/>
</dbReference>
<dbReference type="InterPro" id="IPR003593">
    <property type="entry name" value="AAA+_ATPase"/>
</dbReference>
<dbReference type="InterPro" id="IPR003959">
    <property type="entry name" value="ATPase_AAA_core"/>
</dbReference>
<dbReference type="InterPro" id="IPR019489">
    <property type="entry name" value="Clp_ATPase_C"/>
</dbReference>
<dbReference type="InterPro" id="IPR036628">
    <property type="entry name" value="Clp_N_dom_sf"/>
</dbReference>
<dbReference type="InterPro" id="IPR004176">
    <property type="entry name" value="Clp_R_dom"/>
</dbReference>
<dbReference type="InterPro" id="IPR001270">
    <property type="entry name" value="ClpA/B"/>
</dbReference>
<dbReference type="InterPro" id="IPR018368">
    <property type="entry name" value="ClpA/B_CS1"/>
</dbReference>
<dbReference type="InterPro" id="IPR028299">
    <property type="entry name" value="ClpA/B_CS2"/>
</dbReference>
<dbReference type="InterPro" id="IPR041546">
    <property type="entry name" value="ClpA/ClpB_AAA_lid"/>
</dbReference>
<dbReference type="InterPro" id="IPR050130">
    <property type="entry name" value="ClpA_ClpB"/>
</dbReference>
<dbReference type="InterPro" id="IPR027417">
    <property type="entry name" value="P-loop_NTPase"/>
</dbReference>
<dbReference type="PANTHER" id="PTHR11638">
    <property type="entry name" value="ATP-DEPENDENT CLP PROTEASE"/>
    <property type="match status" value="1"/>
</dbReference>
<dbReference type="PANTHER" id="PTHR11638:SF155">
    <property type="entry name" value="CHAPERONE PROTEIN CLPC1, CHLOROPLASTIC-LIKE"/>
    <property type="match status" value="1"/>
</dbReference>
<dbReference type="Pfam" id="PF00004">
    <property type="entry name" value="AAA"/>
    <property type="match status" value="1"/>
</dbReference>
<dbReference type="Pfam" id="PF07724">
    <property type="entry name" value="AAA_2"/>
    <property type="match status" value="1"/>
</dbReference>
<dbReference type="Pfam" id="PF17871">
    <property type="entry name" value="AAA_lid_9"/>
    <property type="match status" value="1"/>
</dbReference>
<dbReference type="Pfam" id="PF02861">
    <property type="entry name" value="Clp_N"/>
    <property type="match status" value="2"/>
</dbReference>
<dbReference type="Pfam" id="PF10431">
    <property type="entry name" value="ClpB_D2-small"/>
    <property type="match status" value="1"/>
</dbReference>
<dbReference type="PRINTS" id="PR00300">
    <property type="entry name" value="CLPPROTEASEA"/>
</dbReference>
<dbReference type="SMART" id="SM00382">
    <property type="entry name" value="AAA"/>
    <property type="match status" value="2"/>
</dbReference>
<dbReference type="SMART" id="SM01086">
    <property type="entry name" value="ClpB_D2-small"/>
    <property type="match status" value="1"/>
</dbReference>
<dbReference type="SUPFAM" id="SSF81923">
    <property type="entry name" value="Double Clp-N motif"/>
    <property type="match status" value="1"/>
</dbReference>
<dbReference type="SUPFAM" id="SSF52540">
    <property type="entry name" value="P-loop containing nucleoside triphosphate hydrolases"/>
    <property type="match status" value="2"/>
</dbReference>
<dbReference type="PROSITE" id="PS51903">
    <property type="entry name" value="CLP_R"/>
    <property type="match status" value="1"/>
</dbReference>
<dbReference type="PROSITE" id="PS00870">
    <property type="entry name" value="CLPAB_1"/>
    <property type="match status" value="1"/>
</dbReference>
<dbReference type="PROSITE" id="PS00871">
    <property type="entry name" value="CLPAB_2"/>
    <property type="match status" value="1"/>
</dbReference>
<keyword id="KW-0067">ATP-binding</keyword>
<keyword id="KW-0143">Chaperone</keyword>
<keyword id="KW-0150">Chloroplast</keyword>
<keyword id="KW-0547">Nucleotide-binding</keyword>
<keyword id="KW-0934">Plastid</keyword>
<keyword id="KW-0677">Repeat</keyword>
<sequence length="885" mass="99918">MFEKFTEGAIKVIMLSQEEARRMGHNFVGTEQLLLGIIGQRHGIGARALKKQKVTLKKARREIELYIGRGTGFVASEIPFTPRAKRVLEMAVHEGKDLGQNFVGTEHILLALISESDGVAMRTLDKLGVNIPKLRNLILMYIEENQEEILRPLTQAEKFLLEREKKGSSTPTLDEYSENISKEAVDGKLDPVIGRDKEIHEVIKVLARRRKNNPVLIGEPGVGKTAVAEGLAQLIIAEKAPDFLDGNLLMALDLGSILAGTKYRGEFEERIKRIVEEVQNDSAIILVIDEIHTLVGAGAAEGAVDAANILKPALARGKFRCIGATTIDEYRKYIERDPALERRFQPVHVKEPTVGVTIEILLGLRSKFEEHHTLSYHDKAVEQAAILADKFIADRFLPDKAIDVLDEAGSRVRLENRRLPRGMKRLLKELQDTLRDKEESIKEHDFDIAKQLVDHEMEVRTHIRIMKQSILTNETLGLARKEIDTVLEGDVAEVIAGWTGIPVNKISDSESKRLLTMEETLHERLIGQHHAIVSVSKAIRRARVGLRNPDRPIASFIFAGPTGVGKTELTKALSEYMFGNEDSMIRLDMSEYMEKHTVAKLIGSPPGYVGYNEGGQLTEAVQTKPYSVVLLDEVEKAHPDVFNLLLQILDDGRLTDSKGRTIDFRNTMIIMTTNLGAKIIEKESGIKPKTKQDKPAFRIDESGCLGWEPTPEPIKDSALFEKVTELVNEELKEFFRPEFLNRIDEIIVFNHLTKYDIWEICGLMVKQLQKRLEEKELTLEVDVSVRNLLTEEGYDPVYGARPLRRAVMRLLEDTLAQQCLSKPLYPGTILRVSRVKEEGTLASYTNDVKVEIDYRRVDPRLLEQAEEKKEQNQEETKQNILKTDA</sequence>
<accession>P49574</accession>
<protein>
    <recommendedName>
        <fullName>ATP-dependent Clp protease ATP-binding subunit ClpA homolog</fullName>
    </recommendedName>
</protein>
<name>CLPC_TRICV</name>
<feature type="chain" id="PRO_0000191218" description="ATP-dependent Clp protease ATP-binding subunit ClpA homolog">
    <location>
        <begin position="1"/>
        <end position="885"/>
    </location>
</feature>
<feature type="domain" description="Clp R" evidence="2">
    <location>
        <begin position="2"/>
        <end position="145"/>
    </location>
</feature>
<feature type="region of interest" description="Repeat 1" evidence="2">
    <location>
        <begin position="5"/>
        <end position="70"/>
    </location>
</feature>
<feature type="region of interest" description="Repeat 2" evidence="2">
    <location>
        <begin position="80"/>
        <end position="145"/>
    </location>
</feature>
<feature type="region of interest" description="Disordered" evidence="3">
    <location>
        <begin position="864"/>
        <end position="885"/>
    </location>
</feature>
<feature type="binding site" evidence="1">
    <location>
        <begin position="218"/>
        <end position="225"/>
    </location>
    <ligand>
        <name>ATP</name>
        <dbReference type="ChEBI" id="CHEBI:30616"/>
    </ligand>
</feature>
<feature type="binding site" evidence="1">
    <location>
        <begin position="560"/>
        <end position="567"/>
    </location>
    <ligand>
        <name>ATP</name>
        <dbReference type="ChEBI" id="CHEBI:30616"/>
    </ligand>
</feature>
<gene>
    <name type="primary">clpC</name>
</gene>
<reference key="1">
    <citation type="journal article" date="1995" name="Plant Mol. Biol. Rep.">
        <title>The chloroplast genome of a chlorophyll a+c-containing alga, Odontella sinensis.</title>
        <authorList>
            <person name="Kowallik K.V."/>
            <person name="Stoebe B."/>
            <person name="Schaffran I."/>
            <person name="Kroth-Pancic P."/>
            <person name="Freier U."/>
        </authorList>
    </citation>
    <scope>NUCLEOTIDE SEQUENCE [LARGE SCALE GENOMIC DNA]</scope>
</reference>
<organism>
    <name type="scientific">Trieres chinensis</name>
    <name type="common">Marine centric diatom</name>
    <name type="synonym">Odontella sinensis</name>
    <dbReference type="NCBI Taxonomy" id="1514140"/>
    <lineage>
        <taxon>Eukaryota</taxon>
        <taxon>Sar</taxon>
        <taxon>Stramenopiles</taxon>
        <taxon>Ochrophyta</taxon>
        <taxon>Bacillariophyta</taxon>
        <taxon>Mediophyceae</taxon>
        <taxon>Biddulphiophycidae</taxon>
        <taxon>Eupodiscales</taxon>
        <taxon>Parodontellaceae</taxon>
        <taxon>Trieres</taxon>
    </lineage>
</organism>